<protein>
    <recommendedName>
        <fullName evidence="1">Adenine phosphoribosyltransferase</fullName>
        <shortName evidence="1">APRT</shortName>
        <ecNumber evidence="1">2.4.2.7</ecNumber>
    </recommendedName>
</protein>
<evidence type="ECO:0000255" key="1">
    <source>
        <dbReference type="HAMAP-Rule" id="MF_00004"/>
    </source>
</evidence>
<feature type="chain" id="PRO_1000000355" description="Adenine phosphoribosyltransferase">
    <location>
        <begin position="1"/>
        <end position="172"/>
    </location>
</feature>
<name>APT_STRPF</name>
<comment type="function">
    <text evidence="1">Catalyzes a salvage reaction resulting in the formation of AMP, that is energically less costly than de novo synthesis.</text>
</comment>
<comment type="catalytic activity">
    <reaction evidence="1">
        <text>AMP + diphosphate = 5-phospho-alpha-D-ribose 1-diphosphate + adenine</text>
        <dbReference type="Rhea" id="RHEA:16609"/>
        <dbReference type="ChEBI" id="CHEBI:16708"/>
        <dbReference type="ChEBI" id="CHEBI:33019"/>
        <dbReference type="ChEBI" id="CHEBI:58017"/>
        <dbReference type="ChEBI" id="CHEBI:456215"/>
        <dbReference type="EC" id="2.4.2.7"/>
    </reaction>
</comment>
<comment type="pathway">
    <text evidence="1">Purine metabolism; AMP biosynthesis via salvage pathway; AMP from adenine: step 1/1.</text>
</comment>
<comment type="subunit">
    <text evidence="1">Homodimer.</text>
</comment>
<comment type="subcellular location">
    <subcellularLocation>
        <location evidence="1">Cytoplasm</location>
    </subcellularLocation>
</comment>
<comment type="similarity">
    <text evidence="1">Belongs to the purine/pyrimidine phosphoribosyltransferase family.</text>
</comment>
<organism>
    <name type="scientific">Streptococcus pyogenes serotype M4 (strain MGAS10750)</name>
    <dbReference type="NCBI Taxonomy" id="370554"/>
    <lineage>
        <taxon>Bacteria</taxon>
        <taxon>Bacillati</taxon>
        <taxon>Bacillota</taxon>
        <taxon>Bacilli</taxon>
        <taxon>Lactobacillales</taxon>
        <taxon>Streptococcaceae</taxon>
        <taxon>Streptococcus</taxon>
    </lineage>
</organism>
<gene>
    <name evidence="1" type="primary">apt</name>
    <name type="ordered locus">MGAS10750_Spy0822</name>
</gene>
<keyword id="KW-0963">Cytoplasm</keyword>
<keyword id="KW-0328">Glycosyltransferase</keyword>
<keyword id="KW-0660">Purine salvage</keyword>
<keyword id="KW-0808">Transferase</keyword>
<proteinExistence type="inferred from homology"/>
<dbReference type="EC" id="2.4.2.7" evidence="1"/>
<dbReference type="EMBL" id="CP000262">
    <property type="protein sequence ID" value="ABF37772.1"/>
    <property type="molecule type" value="Genomic_DNA"/>
</dbReference>
<dbReference type="SMR" id="Q1J702"/>
<dbReference type="KEGG" id="spi:MGAS10750_Spy0822"/>
<dbReference type="HOGENOM" id="CLU_063339_3_0_9"/>
<dbReference type="UniPathway" id="UPA00588">
    <property type="reaction ID" value="UER00646"/>
</dbReference>
<dbReference type="Proteomes" id="UP000002434">
    <property type="component" value="Chromosome"/>
</dbReference>
<dbReference type="GO" id="GO:0005737">
    <property type="term" value="C:cytoplasm"/>
    <property type="evidence" value="ECO:0007669"/>
    <property type="project" value="UniProtKB-SubCell"/>
</dbReference>
<dbReference type="GO" id="GO:0002055">
    <property type="term" value="F:adenine binding"/>
    <property type="evidence" value="ECO:0007669"/>
    <property type="project" value="TreeGrafter"/>
</dbReference>
<dbReference type="GO" id="GO:0003999">
    <property type="term" value="F:adenine phosphoribosyltransferase activity"/>
    <property type="evidence" value="ECO:0007669"/>
    <property type="project" value="UniProtKB-UniRule"/>
</dbReference>
<dbReference type="GO" id="GO:0016208">
    <property type="term" value="F:AMP binding"/>
    <property type="evidence" value="ECO:0007669"/>
    <property type="project" value="TreeGrafter"/>
</dbReference>
<dbReference type="GO" id="GO:0006168">
    <property type="term" value="P:adenine salvage"/>
    <property type="evidence" value="ECO:0007669"/>
    <property type="project" value="InterPro"/>
</dbReference>
<dbReference type="GO" id="GO:0044209">
    <property type="term" value="P:AMP salvage"/>
    <property type="evidence" value="ECO:0007669"/>
    <property type="project" value="UniProtKB-UniRule"/>
</dbReference>
<dbReference type="GO" id="GO:0006166">
    <property type="term" value="P:purine ribonucleoside salvage"/>
    <property type="evidence" value="ECO:0007669"/>
    <property type="project" value="UniProtKB-KW"/>
</dbReference>
<dbReference type="CDD" id="cd06223">
    <property type="entry name" value="PRTases_typeI"/>
    <property type="match status" value="1"/>
</dbReference>
<dbReference type="FunFam" id="3.40.50.2020:FF:000004">
    <property type="entry name" value="Adenine phosphoribosyltransferase"/>
    <property type="match status" value="1"/>
</dbReference>
<dbReference type="Gene3D" id="3.40.50.2020">
    <property type="match status" value="1"/>
</dbReference>
<dbReference type="HAMAP" id="MF_00004">
    <property type="entry name" value="Aden_phosphoribosyltr"/>
    <property type="match status" value="1"/>
</dbReference>
<dbReference type="InterPro" id="IPR005764">
    <property type="entry name" value="Ade_phspho_trans"/>
</dbReference>
<dbReference type="InterPro" id="IPR000836">
    <property type="entry name" value="PRibTrfase_dom"/>
</dbReference>
<dbReference type="InterPro" id="IPR029057">
    <property type="entry name" value="PRTase-like"/>
</dbReference>
<dbReference type="InterPro" id="IPR050054">
    <property type="entry name" value="UPRTase/APRTase"/>
</dbReference>
<dbReference type="NCBIfam" id="TIGR01090">
    <property type="entry name" value="apt"/>
    <property type="match status" value="1"/>
</dbReference>
<dbReference type="NCBIfam" id="NF002633">
    <property type="entry name" value="PRK02304.1-2"/>
    <property type="match status" value="1"/>
</dbReference>
<dbReference type="NCBIfam" id="NF002634">
    <property type="entry name" value="PRK02304.1-3"/>
    <property type="match status" value="1"/>
</dbReference>
<dbReference type="NCBIfam" id="NF002636">
    <property type="entry name" value="PRK02304.1-5"/>
    <property type="match status" value="1"/>
</dbReference>
<dbReference type="PANTHER" id="PTHR32315">
    <property type="entry name" value="ADENINE PHOSPHORIBOSYLTRANSFERASE"/>
    <property type="match status" value="1"/>
</dbReference>
<dbReference type="PANTHER" id="PTHR32315:SF3">
    <property type="entry name" value="ADENINE PHOSPHORIBOSYLTRANSFERASE"/>
    <property type="match status" value="1"/>
</dbReference>
<dbReference type="Pfam" id="PF00156">
    <property type="entry name" value="Pribosyltran"/>
    <property type="match status" value="1"/>
</dbReference>
<dbReference type="SUPFAM" id="SSF53271">
    <property type="entry name" value="PRTase-like"/>
    <property type="match status" value="1"/>
</dbReference>
<dbReference type="PROSITE" id="PS00103">
    <property type="entry name" value="PUR_PYR_PR_TRANSFER"/>
    <property type="match status" value="1"/>
</dbReference>
<reference key="1">
    <citation type="journal article" date="2006" name="Proc. Natl. Acad. Sci. U.S.A.">
        <title>Molecular genetic anatomy of inter- and intraserotype variation in the human bacterial pathogen group A Streptococcus.</title>
        <authorList>
            <person name="Beres S.B."/>
            <person name="Richter E.W."/>
            <person name="Nagiec M.J."/>
            <person name="Sumby P."/>
            <person name="Porcella S.F."/>
            <person name="DeLeo F.R."/>
            <person name="Musser J.M."/>
        </authorList>
    </citation>
    <scope>NUCLEOTIDE SEQUENCE [LARGE SCALE GENOMIC DNA]</scope>
    <source>
        <strain>MGAS10750</strain>
    </source>
</reference>
<sequence>MDLTNYIASIKDYPKAGITFRDISPLMADGKAYSYAIREIAQYACDKDIDMVVGPEARGFIIGCPVAVELGIGFAPVRKPGKLPRDVVSADYEKEYGLDTLTMHADAIKPGQRVLIVDDLLATGGTVKATIEMIEKLGGIVAGCAFLIELEGLNGRHAIRNYDYKVLMQFPG</sequence>
<accession>Q1J702</accession>